<comment type="similarity">
    <text evidence="1">Belongs to the UPF0223 family.</text>
</comment>
<accession>B1HPT4</accession>
<sequence length="95" mass="11159">MEYSYPFSTDWSTEEIVDVVQFFEGIEQAHEKGIKREVMMAKYRRFKEIVPSQAEEKTIFREFEEASGYISYPVVKQTKEAADGTIIKIVPKKNR</sequence>
<reference key="1">
    <citation type="journal article" date="2008" name="J. Bacteriol.">
        <title>Complete genome sequence of the mosquitocidal bacterium Bacillus sphaericus C3-41 and comparison with those of closely related Bacillus species.</title>
        <authorList>
            <person name="Hu X."/>
            <person name="Fan W."/>
            <person name="Han B."/>
            <person name="Liu H."/>
            <person name="Zheng D."/>
            <person name="Li Q."/>
            <person name="Dong W."/>
            <person name="Yan J."/>
            <person name="Gao M."/>
            <person name="Berry C."/>
            <person name="Yuan Z."/>
        </authorList>
    </citation>
    <scope>NUCLEOTIDE SEQUENCE [LARGE SCALE GENOMIC DNA]</scope>
    <source>
        <strain>C3-41</strain>
    </source>
</reference>
<evidence type="ECO:0000255" key="1">
    <source>
        <dbReference type="HAMAP-Rule" id="MF_01041"/>
    </source>
</evidence>
<protein>
    <recommendedName>
        <fullName evidence="1">UPF0223 protein Bsph_1378</fullName>
    </recommendedName>
</protein>
<organism>
    <name type="scientific">Lysinibacillus sphaericus (strain C3-41)</name>
    <dbReference type="NCBI Taxonomy" id="444177"/>
    <lineage>
        <taxon>Bacteria</taxon>
        <taxon>Bacillati</taxon>
        <taxon>Bacillota</taxon>
        <taxon>Bacilli</taxon>
        <taxon>Bacillales</taxon>
        <taxon>Bacillaceae</taxon>
        <taxon>Lysinibacillus</taxon>
    </lineage>
</organism>
<dbReference type="EMBL" id="CP000817">
    <property type="protein sequence ID" value="ACA38986.1"/>
    <property type="molecule type" value="Genomic_DNA"/>
</dbReference>
<dbReference type="RefSeq" id="WP_012293108.1">
    <property type="nucleotide sequence ID" value="NC_010382.1"/>
</dbReference>
<dbReference type="SMR" id="B1HPT4"/>
<dbReference type="EnsemblBacteria" id="ACA38986">
    <property type="protein sequence ID" value="ACA38986"/>
    <property type="gene ID" value="Bsph_1378"/>
</dbReference>
<dbReference type="KEGG" id="lsp:Bsph_1378"/>
<dbReference type="HOGENOM" id="CLU_166693_0_0_9"/>
<dbReference type="Proteomes" id="UP000002164">
    <property type="component" value="Chromosome"/>
</dbReference>
<dbReference type="Gene3D" id="1.10.220.80">
    <property type="entry name" value="BH2638-like"/>
    <property type="match status" value="1"/>
</dbReference>
<dbReference type="HAMAP" id="MF_01041">
    <property type="entry name" value="UPF0223"/>
    <property type="match status" value="1"/>
</dbReference>
<dbReference type="InterPro" id="IPR023324">
    <property type="entry name" value="BH2638-like_sf"/>
</dbReference>
<dbReference type="InterPro" id="IPR007920">
    <property type="entry name" value="UPF0223"/>
</dbReference>
<dbReference type="NCBIfam" id="NF003353">
    <property type="entry name" value="PRK04387.1"/>
    <property type="match status" value="1"/>
</dbReference>
<dbReference type="Pfam" id="PF05256">
    <property type="entry name" value="UPF0223"/>
    <property type="match status" value="1"/>
</dbReference>
<dbReference type="PIRSF" id="PIRSF037260">
    <property type="entry name" value="UPF0223"/>
    <property type="match status" value="1"/>
</dbReference>
<dbReference type="SUPFAM" id="SSF158504">
    <property type="entry name" value="BH2638-like"/>
    <property type="match status" value="1"/>
</dbReference>
<name>Y1378_LYSSC</name>
<proteinExistence type="inferred from homology"/>
<feature type="chain" id="PRO_1000136028" description="UPF0223 protein Bsph_1378">
    <location>
        <begin position="1"/>
        <end position="95"/>
    </location>
</feature>
<gene>
    <name type="ordered locus">Bsph_1378</name>
</gene>